<keyword id="KW-0002">3D-structure</keyword>
<keyword id="KW-0963">Cytoplasm</keyword>
<keyword id="KW-0328">Glycosyltransferase</keyword>
<keyword id="KW-0460">Magnesium</keyword>
<keyword id="KW-0479">Metal-binding</keyword>
<keyword id="KW-0547">Nucleotide-binding</keyword>
<keyword id="KW-0660">Purine salvage</keyword>
<keyword id="KW-1185">Reference proteome</keyword>
<keyword id="KW-0808">Transferase</keyword>
<accession>P0A9M2</accession>
<accession>P36766</accession>
<sequence length="178" mass="20115">MKHTVEVMIPEAEIKARIAELGRQITERYKDSGSDMVLVGLLRGSFMFMADLCREVQVSHEVDFMTASSYGSGMSTTRDVKILKDLDEDIRGKDVLIVEDIIDSGNTLSKVREILSLREPKSLAICTLLDKPSRREVNVPVEFIGFSIPDEFVVGYGIDYAQRYRHLPYIGKVILLDE</sequence>
<reference key="1">
    <citation type="journal article" date="1994" name="Nucleic Acids Res.">
        <title>Systematic sequencing of the Escherichia coli genome: analysis of the 2.4-4.1 min (110,917-193,643 bp) region.</title>
        <authorList>
            <person name="Fujita N."/>
            <person name="Mori H."/>
            <person name="Yura T."/>
            <person name="Ishihama A."/>
        </authorList>
    </citation>
    <scope>NUCLEOTIDE SEQUENCE [LARGE SCALE GENOMIC DNA]</scope>
    <source>
        <strain>K12 / W3110 / ATCC 27325 / DSM 5911</strain>
    </source>
</reference>
<reference key="2">
    <citation type="journal article" date="1997" name="Science">
        <title>The complete genome sequence of Escherichia coli K-12.</title>
        <authorList>
            <person name="Blattner F.R."/>
            <person name="Plunkett G. III"/>
            <person name="Bloch C.A."/>
            <person name="Perna N.T."/>
            <person name="Burland V."/>
            <person name="Riley M."/>
            <person name="Collado-Vides J."/>
            <person name="Glasner J.D."/>
            <person name="Rode C.K."/>
            <person name="Mayhew G.F."/>
            <person name="Gregor J."/>
            <person name="Davis N.W."/>
            <person name="Kirkpatrick H.A."/>
            <person name="Goeden M.A."/>
            <person name="Rose D.J."/>
            <person name="Mau B."/>
            <person name="Shao Y."/>
        </authorList>
    </citation>
    <scope>NUCLEOTIDE SEQUENCE [LARGE SCALE GENOMIC DNA]</scope>
    <source>
        <strain>K12 / MG1655 / ATCC 47076</strain>
    </source>
</reference>
<reference key="3">
    <citation type="journal article" date="2006" name="Mol. Syst. Biol.">
        <title>Highly accurate genome sequences of Escherichia coli K-12 strains MG1655 and W3110.</title>
        <authorList>
            <person name="Hayashi K."/>
            <person name="Morooka N."/>
            <person name="Yamamoto Y."/>
            <person name="Fujita K."/>
            <person name="Isono K."/>
            <person name="Choi S."/>
            <person name="Ohtsubo E."/>
            <person name="Baba T."/>
            <person name="Wanner B.L."/>
            <person name="Mori H."/>
            <person name="Horiuchi T."/>
        </authorList>
    </citation>
    <scope>NUCLEOTIDE SEQUENCE [LARGE SCALE GENOMIC DNA]</scope>
    <source>
        <strain>K12 / W3110 / ATCC 27325 / DSM 5911</strain>
    </source>
</reference>
<reference key="4">
    <citation type="journal article" date="2013" name="J. Med. Chem.">
        <title>Inhibition of the Escherichia coli 6-oxopurine phosphoribosyltransferases by nucleoside phosphonates: potential for new antibacterial agents.</title>
        <authorList>
            <person name="Keough D.T."/>
            <person name="Hockova D."/>
            <person name="Rejman D."/>
            <person name="Spacek P."/>
            <person name="Vrbkova S."/>
            <person name="Krecmerova M."/>
            <person name="Eng W.S."/>
            <person name="Jans H."/>
            <person name="West N.P."/>
            <person name="Naesens L.M."/>
            <person name="de Jersey J."/>
            <person name="Guddat L.W."/>
        </authorList>
    </citation>
    <scope>FUNCTION</scope>
    <scope>CATALYTIC ACTIVITY</scope>
    <scope>ACTIVITY REGULATION</scope>
</reference>
<reference evidence="8 9 10" key="5">
    <citation type="journal article" date="2002" name="Protein Sci.">
        <title>Crystal structures of free, IMP-, and GMP-bound Escherichia coli hypoxanthine phosphoribosyltransferase.</title>
        <authorList>
            <person name="Guddat L.W."/>
            <person name="Vos S."/>
            <person name="Martin J.L."/>
            <person name="Keough D.T."/>
            <person name="de Jersey J."/>
        </authorList>
    </citation>
    <scope>X-RAY CRYSTALLOGRAPHY (2.8 ANGSTROMS) IN COMPLEXES WITH IMP; GMP AND MAGNESIUM</scope>
    <scope>FUNCTION</scope>
    <scope>CATALYTIC ACTIVITY</scope>
    <scope>SUBSTRATE SPECIFICITY</scope>
    <scope>BIOPHYSICOCHEMICAL PROPERTIES</scope>
    <scope>SUBUNIT</scope>
    <scope>COFACTOR</scope>
    <scope>ACTIVITY REGULATION</scope>
    <scope>PATHWAY</scope>
    <scope>IDENTIFICATION BY MASS SPECTROMETRY</scope>
</reference>
<reference evidence="11 12 13 14 15 16" key="6">
    <citation type="journal article" date="2016" name="ChemistrySelect">
        <title>Crystal Structures of Acyclic Nucleoside Phosphonates in Complex with Escherichia coli Hypoxanthine Phosphoribosyltransferase.</title>
        <authorList>
            <person name="Eng W.S."/>
            <person name="Hockova D."/>
            <person name="Spacek P."/>
            <person name="Baszczynski O."/>
            <person name="Janeba Z."/>
            <person name="Naesens L."/>
            <person name="Keough D.T."/>
            <person name="Guddat L.W."/>
        </authorList>
    </citation>
    <scope>X-RAY CRYSTALLOGRAPHY (2.40 ANGSTROMS) IN COMPLEXES WITH NUCLEOSIDE PHOSPHONATES INHIBITORS</scope>
    <scope>ACTIVITY REGULATION</scope>
</reference>
<gene>
    <name type="primary">hpt</name>
    <name type="ordered locus">b0125</name>
    <name type="ordered locus">JW5009</name>
</gene>
<name>HPRT_ECOLI</name>
<organism>
    <name type="scientific">Escherichia coli (strain K12)</name>
    <dbReference type="NCBI Taxonomy" id="83333"/>
    <lineage>
        <taxon>Bacteria</taxon>
        <taxon>Pseudomonadati</taxon>
        <taxon>Pseudomonadota</taxon>
        <taxon>Gammaproteobacteria</taxon>
        <taxon>Enterobacterales</taxon>
        <taxon>Enterobacteriaceae</taxon>
        <taxon>Escherichia</taxon>
    </lineage>
</organism>
<feature type="chain" id="PRO_0000139632" description="Hypoxanthine phosphoribosyltransferase">
    <location>
        <begin position="1"/>
        <end position="178"/>
    </location>
</feature>
<feature type="active site" description="Proton acceptor" evidence="7">
    <location>
        <position position="103"/>
    </location>
</feature>
<feature type="binding site" evidence="1">
    <location>
        <position position="43"/>
    </location>
    <ligand>
        <name>diphosphate</name>
        <dbReference type="ChEBI" id="CHEBI:33019"/>
    </ligand>
</feature>
<feature type="binding site" evidence="1">
    <location>
        <position position="44"/>
    </location>
    <ligand>
        <name>diphosphate</name>
        <dbReference type="ChEBI" id="CHEBI:33019"/>
    </ligand>
</feature>
<feature type="binding site" evidence="2 9">
    <location>
        <position position="99"/>
    </location>
    <ligand>
        <name>GMP</name>
        <dbReference type="ChEBI" id="CHEBI:58115"/>
    </ligand>
</feature>
<feature type="binding site" evidence="2 8">
    <location>
        <position position="99"/>
    </location>
    <ligand>
        <name>IMP</name>
        <dbReference type="ChEBI" id="CHEBI:58053"/>
    </ligand>
</feature>
<feature type="binding site" evidence="2 10">
    <location>
        <position position="99"/>
    </location>
    <ligand>
        <name>Mg(2+)</name>
        <dbReference type="ChEBI" id="CHEBI:18420"/>
    </ligand>
</feature>
<feature type="binding site" evidence="2 10">
    <location>
        <position position="100"/>
    </location>
    <ligand>
        <name>Mg(2+)</name>
        <dbReference type="ChEBI" id="CHEBI:18420"/>
    </ligand>
</feature>
<feature type="binding site" evidence="2 9">
    <location>
        <begin position="103"/>
        <end position="108"/>
    </location>
    <ligand>
        <name>GMP</name>
        <dbReference type="ChEBI" id="CHEBI:58115"/>
    </ligand>
</feature>
<feature type="binding site" evidence="2 8">
    <location>
        <begin position="103"/>
        <end position="108"/>
    </location>
    <ligand>
        <name>IMP</name>
        <dbReference type="ChEBI" id="CHEBI:58053"/>
    </ligand>
</feature>
<feature type="binding site" evidence="2 9">
    <location>
        <position position="131"/>
    </location>
    <ligand>
        <name>GMP</name>
        <dbReference type="ChEBI" id="CHEBI:58115"/>
    </ligand>
</feature>
<feature type="binding site" evidence="2 8">
    <location>
        <position position="131"/>
    </location>
    <ligand>
        <name>IMP</name>
        <dbReference type="ChEBI" id="CHEBI:58053"/>
    </ligand>
</feature>
<feature type="binding site" evidence="2 9">
    <location>
        <position position="159"/>
    </location>
    <ligand>
        <name>GMP</name>
        <dbReference type="ChEBI" id="CHEBI:58115"/>
    </ligand>
</feature>
<feature type="binding site" evidence="1">
    <location>
        <position position="165"/>
    </location>
    <ligand>
        <name>diphosphate</name>
        <dbReference type="ChEBI" id="CHEBI:33019"/>
    </ligand>
</feature>
<feature type="strand" evidence="18">
    <location>
        <begin position="3"/>
        <end position="9"/>
    </location>
</feature>
<feature type="helix" evidence="18">
    <location>
        <begin position="11"/>
        <end position="29"/>
    </location>
</feature>
<feature type="turn" evidence="17">
    <location>
        <begin position="30"/>
        <end position="32"/>
    </location>
</feature>
<feature type="strand" evidence="18">
    <location>
        <begin position="36"/>
        <end position="41"/>
    </location>
</feature>
<feature type="turn" evidence="18">
    <location>
        <begin position="42"/>
        <end position="45"/>
    </location>
</feature>
<feature type="helix" evidence="18">
    <location>
        <begin position="46"/>
        <end position="54"/>
    </location>
</feature>
<feature type="strand" evidence="18">
    <location>
        <begin position="61"/>
        <end position="67"/>
    </location>
</feature>
<feature type="turn" evidence="18">
    <location>
        <begin position="73"/>
        <end position="76"/>
    </location>
</feature>
<feature type="strand" evidence="18">
    <location>
        <begin position="82"/>
        <end position="84"/>
    </location>
</feature>
<feature type="strand" evidence="18">
    <location>
        <begin position="93"/>
        <end position="104"/>
    </location>
</feature>
<feature type="helix" evidence="18">
    <location>
        <begin position="106"/>
        <end position="116"/>
    </location>
</feature>
<feature type="strand" evidence="18">
    <location>
        <begin position="121"/>
        <end position="130"/>
    </location>
</feature>
<feature type="helix" evidence="18">
    <location>
        <begin position="132"/>
        <end position="134"/>
    </location>
</feature>
<feature type="strand" evidence="18">
    <location>
        <begin position="142"/>
        <end position="147"/>
    </location>
</feature>
<feature type="strand" evidence="18">
    <location>
        <begin position="153"/>
        <end position="155"/>
    </location>
</feature>
<feature type="strand" evidence="19">
    <location>
        <begin position="160"/>
        <end position="162"/>
    </location>
</feature>
<feature type="strand" evidence="18">
    <location>
        <begin position="168"/>
        <end position="175"/>
    </location>
</feature>
<comment type="function">
    <text evidence="2">Purine salvage pathway enzyme which catalyzes the transfer of the ribosyl-5-phosphate group from 5-phospho-alpha-D-ribose 1-diphosphate (PRPP) to the N9 position of hypoxanthine to yield IMP (inosine 5'-monophosphate). To a lesser extent, can also act on guanine leading to GMP, but shows a highly less efficient activity with xanthine.</text>
</comment>
<comment type="catalytic activity">
    <reaction evidence="2">
        <text>IMP + diphosphate = hypoxanthine + 5-phospho-alpha-D-ribose 1-diphosphate</text>
        <dbReference type="Rhea" id="RHEA:17973"/>
        <dbReference type="ChEBI" id="CHEBI:17368"/>
        <dbReference type="ChEBI" id="CHEBI:33019"/>
        <dbReference type="ChEBI" id="CHEBI:58017"/>
        <dbReference type="ChEBI" id="CHEBI:58053"/>
        <dbReference type="EC" id="2.4.2.8"/>
    </reaction>
    <physiologicalReaction direction="right-to-left" evidence="7">
        <dbReference type="Rhea" id="RHEA:17975"/>
    </physiologicalReaction>
</comment>
<comment type="catalytic activity">
    <reaction evidence="2">
        <text>GMP + diphosphate = guanine + 5-phospho-alpha-D-ribose 1-diphosphate</text>
        <dbReference type="Rhea" id="RHEA:25424"/>
        <dbReference type="ChEBI" id="CHEBI:16235"/>
        <dbReference type="ChEBI" id="CHEBI:33019"/>
        <dbReference type="ChEBI" id="CHEBI:58017"/>
        <dbReference type="ChEBI" id="CHEBI:58115"/>
        <dbReference type="EC" id="2.4.2.8"/>
    </reaction>
    <physiologicalReaction direction="right-to-left" evidence="7">
        <dbReference type="Rhea" id="RHEA:25426"/>
    </physiologicalReaction>
</comment>
<comment type="cofactor">
    <cofactor evidence="7">
        <name>Mg(2+)</name>
        <dbReference type="ChEBI" id="CHEBI:18420"/>
    </cofactor>
</comment>
<comment type="activity regulation">
    <text evidence="2 3 4">Inhibited by the product IMP (PubMed:12070315). Highly inhibited by nucleoside phosphonates, which are product analogs (PubMed:23927482, Ref.6).</text>
</comment>
<comment type="biophysicochemical properties">
    <kinetics>
        <KM evidence="2">12.5 uM for hypoxanthine (at pH 8.5 and 25 degrees Celsius)</KM>
        <KM evidence="2">294 uM for guanine (at pH 8.5 and 25 degrees Celsius)</KM>
        <KM evidence="2">25 uM for xanthine (at pH 8.5 and 25 degrees Celsius)</KM>
        <KM evidence="2">192 uM for 5-phospho-alpha-D-ribose 1-diphosphate (at pH 8.5 and 25 degrees Celsius)</KM>
        <text evidence="2">kcat is 59.0 sec(-1) with hypoxanthine as substrate. kcat is 10.2 sec(-1) with guanine as substrate. kcat is 0.008 sec(-1) with xanthine as substrate (at pH 8.5 and 25 degrees Celsius).</text>
    </kinetics>
</comment>
<comment type="pathway">
    <text evidence="7">Purine metabolism; IMP biosynthesis via salvage pathway; IMP from hypoxanthine: step 1/1.</text>
</comment>
<comment type="subunit">
    <text evidence="2">Homotetramer.</text>
</comment>
<comment type="subcellular location">
    <subcellularLocation>
        <location>Cytoplasm</location>
    </subcellularLocation>
</comment>
<comment type="miscellaneous">
    <text evidence="7">E.coli cells express two distinct 6-oxopurine PRTases, with very different specificities for hypoxanthine, guanine, and xanthine. Salvage enzymes allow a more energy efficient synthesis of purine nucleoside monophosphates compared with the de novo pathway. The kinetic analysis suggests that E.coli HPRT is mainly responsible for the synthesis of IMP and that XGPRT primarily salvages guanine and xanthine.</text>
</comment>
<comment type="similarity">
    <text evidence="6">Belongs to the purine/pyrimidine phosphoribosyltransferase family.</text>
</comment>
<dbReference type="EC" id="2.4.2.8" evidence="2"/>
<dbReference type="EMBL" id="U00096">
    <property type="protein sequence ID" value="AAC73236.2"/>
    <property type="molecule type" value="Genomic_DNA"/>
</dbReference>
<dbReference type="EMBL" id="AP009048">
    <property type="protein sequence ID" value="BAB96700.2"/>
    <property type="molecule type" value="Genomic_DNA"/>
</dbReference>
<dbReference type="RefSeq" id="NP_414667.4">
    <property type="nucleotide sequence ID" value="NC_000913.3"/>
</dbReference>
<dbReference type="RefSeq" id="WP_000683335.1">
    <property type="nucleotide sequence ID" value="NZ_STEB01000010.1"/>
</dbReference>
<dbReference type="PDB" id="1G9S">
    <property type="method" value="X-ray"/>
    <property type="resolution" value="2.80 A"/>
    <property type="chains" value="A/B=1-178"/>
</dbReference>
<dbReference type="PDB" id="1G9T">
    <property type="method" value="X-ray"/>
    <property type="resolution" value="2.80 A"/>
    <property type="chains" value="A/B=1-178"/>
</dbReference>
<dbReference type="PDB" id="1GRV">
    <property type="method" value="X-ray"/>
    <property type="resolution" value="2.90 A"/>
    <property type="chains" value="A/B=1-178"/>
</dbReference>
<dbReference type="PDB" id="5KNR">
    <property type="method" value="X-ray"/>
    <property type="resolution" value="2.86 A"/>
    <property type="chains" value="A/B=1-178"/>
</dbReference>
<dbReference type="PDB" id="5KNS">
    <property type="method" value="X-ray"/>
    <property type="resolution" value="2.79 A"/>
    <property type="chains" value="A/B=1-178"/>
</dbReference>
<dbReference type="PDB" id="5KNT">
    <property type="method" value="X-ray"/>
    <property type="resolution" value="2.55 A"/>
    <property type="chains" value="A/B=1-178"/>
</dbReference>
<dbReference type="PDB" id="5KNU">
    <property type="method" value="X-ray"/>
    <property type="resolution" value="2.81 A"/>
    <property type="chains" value="A/B=1-178"/>
</dbReference>
<dbReference type="PDB" id="5KNV">
    <property type="method" value="X-ray"/>
    <property type="resolution" value="2.86 A"/>
    <property type="chains" value="A/B=1-178"/>
</dbReference>
<dbReference type="PDB" id="5KNX">
    <property type="method" value="X-ray"/>
    <property type="resolution" value="2.40 A"/>
    <property type="chains" value="A/B=1-178"/>
</dbReference>
<dbReference type="PDB" id="8CAG">
    <property type="method" value="X-ray"/>
    <property type="resolution" value="2.40 A"/>
    <property type="chains" value="A/B=1-176"/>
</dbReference>
<dbReference type="PDB" id="9K8M">
    <property type="method" value="X-ray"/>
    <property type="resolution" value="2.08 A"/>
    <property type="chains" value="A/B=1-176"/>
</dbReference>
<dbReference type="PDBsum" id="1G9S"/>
<dbReference type="PDBsum" id="1G9T"/>
<dbReference type="PDBsum" id="1GRV"/>
<dbReference type="PDBsum" id="5KNR"/>
<dbReference type="PDBsum" id="5KNS"/>
<dbReference type="PDBsum" id="5KNT"/>
<dbReference type="PDBsum" id="5KNU"/>
<dbReference type="PDBsum" id="5KNV"/>
<dbReference type="PDBsum" id="5KNX"/>
<dbReference type="PDBsum" id="8CAG"/>
<dbReference type="PDBsum" id="9K8M"/>
<dbReference type="SMR" id="P0A9M2"/>
<dbReference type="BioGRID" id="4261679">
    <property type="interactions" value="32"/>
</dbReference>
<dbReference type="BioGRID" id="850970">
    <property type="interactions" value="3"/>
</dbReference>
<dbReference type="DIP" id="DIP-47994N"/>
<dbReference type="FunCoup" id="P0A9M2">
    <property type="interactions" value="642"/>
</dbReference>
<dbReference type="IntAct" id="P0A9M2">
    <property type="interactions" value="5"/>
</dbReference>
<dbReference type="STRING" id="511145.b0125"/>
<dbReference type="DrugBank" id="DB04566">
    <property type="generic name" value="Inosinic Acid"/>
</dbReference>
<dbReference type="jPOST" id="P0A9M2"/>
<dbReference type="PaxDb" id="511145-b0125"/>
<dbReference type="EnsemblBacteria" id="AAC73236">
    <property type="protein sequence ID" value="AAC73236"/>
    <property type="gene ID" value="b0125"/>
</dbReference>
<dbReference type="GeneID" id="86862633"/>
<dbReference type="GeneID" id="946624"/>
<dbReference type="KEGG" id="ecj:JW5009"/>
<dbReference type="KEGG" id="eco:b0125"/>
<dbReference type="KEGG" id="ecoc:C3026_00530"/>
<dbReference type="PATRIC" id="fig|1411691.4.peg.2157"/>
<dbReference type="EchoBASE" id="EB4143"/>
<dbReference type="eggNOG" id="COG0634">
    <property type="taxonomic scope" value="Bacteria"/>
</dbReference>
<dbReference type="HOGENOM" id="CLU_073615_0_0_6"/>
<dbReference type="InParanoid" id="P0A9M2"/>
<dbReference type="OMA" id="MQWRVAP"/>
<dbReference type="OrthoDB" id="9802824at2"/>
<dbReference type="PhylomeDB" id="P0A9M2"/>
<dbReference type="BioCyc" id="EcoCyc:HYPOXANPRIBOSYLTRAN-MONOMER"/>
<dbReference type="BioCyc" id="MetaCyc:HYPOXANPRIBOSYLTRAN-MONOMER"/>
<dbReference type="BRENDA" id="2.4.2.8">
    <property type="organism ID" value="2026"/>
</dbReference>
<dbReference type="UniPathway" id="UPA00591">
    <property type="reaction ID" value="UER00648"/>
</dbReference>
<dbReference type="EvolutionaryTrace" id="P0A9M2"/>
<dbReference type="PRO" id="PR:P0A9M2"/>
<dbReference type="Proteomes" id="UP000000625">
    <property type="component" value="Chromosome"/>
</dbReference>
<dbReference type="GO" id="GO:0005829">
    <property type="term" value="C:cytosol"/>
    <property type="evidence" value="ECO:0000314"/>
    <property type="project" value="EcoCyc"/>
</dbReference>
<dbReference type="GO" id="GO:0032991">
    <property type="term" value="C:protein-containing complex"/>
    <property type="evidence" value="ECO:0000314"/>
    <property type="project" value="EcoCyc"/>
</dbReference>
<dbReference type="GO" id="GO:0052657">
    <property type="term" value="F:guanine phosphoribosyltransferase activity"/>
    <property type="evidence" value="ECO:0000314"/>
    <property type="project" value="EcoCyc"/>
</dbReference>
<dbReference type="GO" id="GO:0097216">
    <property type="term" value="F:guanosine tetraphosphate binding"/>
    <property type="evidence" value="ECO:0000314"/>
    <property type="project" value="EcoCyc"/>
</dbReference>
<dbReference type="GO" id="GO:0004422">
    <property type="term" value="F:hypoxanthine phosphoribosyltransferase activity"/>
    <property type="evidence" value="ECO:0000314"/>
    <property type="project" value="EcoCyc"/>
</dbReference>
<dbReference type="GO" id="GO:0042802">
    <property type="term" value="F:identical protein binding"/>
    <property type="evidence" value="ECO:0000353"/>
    <property type="project" value="EcoCyc"/>
</dbReference>
<dbReference type="GO" id="GO:0000287">
    <property type="term" value="F:magnesium ion binding"/>
    <property type="evidence" value="ECO:0000314"/>
    <property type="project" value="EcoCyc"/>
</dbReference>
<dbReference type="GO" id="GO:0032263">
    <property type="term" value="P:GMP salvage"/>
    <property type="evidence" value="ECO:0000314"/>
    <property type="project" value="EcoliWiki"/>
</dbReference>
<dbReference type="GO" id="GO:0006178">
    <property type="term" value="P:guanine salvage"/>
    <property type="evidence" value="ECO:0000318"/>
    <property type="project" value="GO_Central"/>
</dbReference>
<dbReference type="GO" id="GO:0046100">
    <property type="term" value="P:hypoxanthine metabolic process"/>
    <property type="evidence" value="ECO:0000318"/>
    <property type="project" value="GO_Central"/>
</dbReference>
<dbReference type="GO" id="GO:0032264">
    <property type="term" value="P:IMP salvage"/>
    <property type="evidence" value="ECO:0000314"/>
    <property type="project" value="EcoliWiki"/>
</dbReference>
<dbReference type="GO" id="GO:0051289">
    <property type="term" value="P:protein homotetramerization"/>
    <property type="evidence" value="ECO:0000314"/>
    <property type="project" value="EcoCyc"/>
</dbReference>
<dbReference type="GO" id="GO:0006166">
    <property type="term" value="P:purine ribonucleoside salvage"/>
    <property type="evidence" value="ECO:0007669"/>
    <property type="project" value="UniProtKB-KW"/>
</dbReference>
<dbReference type="CDD" id="cd06223">
    <property type="entry name" value="PRTases_typeI"/>
    <property type="match status" value="1"/>
</dbReference>
<dbReference type="FunFam" id="3.40.50.2020:FF:000006">
    <property type="entry name" value="Hypoxanthine phosphoribosyltransferase"/>
    <property type="match status" value="1"/>
</dbReference>
<dbReference type="Gene3D" id="3.40.50.2020">
    <property type="match status" value="1"/>
</dbReference>
<dbReference type="InterPro" id="IPR050408">
    <property type="entry name" value="HGPRT"/>
</dbReference>
<dbReference type="InterPro" id="IPR005904">
    <property type="entry name" value="Hxn_phspho_trans"/>
</dbReference>
<dbReference type="InterPro" id="IPR000836">
    <property type="entry name" value="PRibTrfase_dom"/>
</dbReference>
<dbReference type="InterPro" id="IPR029057">
    <property type="entry name" value="PRTase-like"/>
</dbReference>
<dbReference type="NCBIfam" id="TIGR01203">
    <property type="entry name" value="HGPRTase"/>
    <property type="match status" value="1"/>
</dbReference>
<dbReference type="PANTHER" id="PTHR43340:SF1">
    <property type="entry name" value="HYPOXANTHINE PHOSPHORIBOSYLTRANSFERASE"/>
    <property type="match status" value="1"/>
</dbReference>
<dbReference type="PANTHER" id="PTHR43340">
    <property type="entry name" value="HYPOXANTHINE-GUANINE PHOSPHORIBOSYLTRANSFERASE"/>
    <property type="match status" value="1"/>
</dbReference>
<dbReference type="Pfam" id="PF00156">
    <property type="entry name" value="Pribosyltran"/>
    <property type="match status" value="1"/>
</dbReference>
<dbReference type="SUPFAM" id="SSF53271">
    <property type="entry name" value="PRTase-like"/>
    <property type="match status" value="1"/>
</dbReference>
<dbReference type="PROSITE" id="PS00103">
    <property type="entry name" value="PUR_PYR_PR_TRANSFER"/>
    <property type="match status" value="1"/>
</dbReference>
<proteinExistence type="evidence at protein level"/>
<evidence type="ECO:0000250" key="1">
    <source>
        <dbReference type="UniProtKB" id="P9WHQ9"/>
    </source>
</evidence>
<evidence type="ECO:0000269" key="2">
    <source>
    </source>
</evidence>
<evidence type="ECO:0000269" key="3">
    <source>
    </source>
</evidence>
<evidence type="ECO:0000269" key="4">
    <source ref="6"/>
</evidence>
<evidence type="ECO:0000303" key="5">
    <source>
    </source>
</evidence>
<evidence type="ECO:0000305" key="6"/>
<evidence type="ECO:0000305" key="7">
    <source>
    </source>
</evidence>
<evidence type="ECO:0007744" key="8">
    <source>
        <dbReference type="PDB" id="1G9S"/>
    </source>
</evidence>
<evidence type="ECO:0007744" key="9">
    <source>
        <dbReference type="PDB" id="1G9T"/>
    </source>
</evidence>
<evidence type="ECO:0007744" key="10">
    <source>
        <dbReference type="PDB" id="1GRV"/>
    </source>
</evidence>
<evidence type="ECO:0007744" key="11">
    <source>
        <dbReference type="PDB" id="5KNR"/>
    </source>
</evidence>
<evidence type="ECO:0007744" key="12">
    <source>
        <dbReference type="PDB" id="5KNS"/>
    </source>
</evidence>
<evidence type="ECO:0007744" key="13">
    <source>
        <dbReference type="PDB" id="5KNT"/>
    </source>
</evidence>
<evidence type="ECO:0007744" key="14">
    <source>
        <dbReference type="PDB" id="5KNU"/>
    </source>
</evidence>
<evidence type="ECO:0007744" key="15">
    <source>
        <dbReference type="PDB" id="5KNV"/>
    </source>
</evidence>
<evidence type="ECO:0007744" key="16">
    <source>
        <dbReference type="PDB" id="5KNX"/>
    </source>
</evidence>
<evidence type="ECO:0007829" key="17">
    <source>
        <dbReference type="PDB" id="1G9T"/>
    </source>
</evidence>
<evidence type="ECO:0007829" key="18">
    <source>
        <dbReference type="PDB" id="5KNX"/>
    </source>
</evidence>
<evidence type="ECO:0007829" key="19">
    <source>
        <dbReference type="PDB" id="8CAG"/>
    </source>
</evidence>
<protein>
    <recommendedName>
        <fullName evidence="5">Hypoxanthine phosphoribosyltransferase</fullName>
        <shortName evidence="5">HPRT</shortName>
        <ecNumber evidence="2">2.4.2.8</ecNumber>
    </recommendedName>
    <alternativeName>
        <fullName evidence="5">6-oxopurine phosphoribosyltransferase</fullName>
        <shortName evidence="5">6-oxopurine PRTase</shortName>
    </alternativeName>
</protein>